<comment type="function">
    <text evidence="1">Involved in transcription antitermination. Required for transcription of ribosomal RNA (rRNA) genes. Binds specifically to the boxA antiterminator sequence of the ribosomal RNA (rrn) operons.</text>
</comment>
<comment type="similarity">
    <text evidence="1">Belongs to the NusB family.</text>
</comment>
<sequence length="142" mass="16271">MASLRRRVRAIALQILFELDATDHSPDQVVARRLEEERLPPEGERFLRRLVFGAWEHASYLDRIIEETAPNWPVSQMPGVDKAILRIALFEALIDEEEKTPLKAIINEAVELAKQYGSDNSSRFVNGVLGTVVSRYRERRKG</sequence>
<gene>
    <name evidence="1" type="primary">nusB</name>
    <name type="ordered locus">RoseRS_0985</name>
</gene>
<feature type="chain" id="PRO_1000023768" description="Transcription antitermination protein NusB">
    <location>
        <begin position="1"/>
        <end position="142"/>
    </location>
</feature>
<dbReference type="EMBL" id="CP000686">
    <property type="protein sequence ID" value="ABQ89394.1"/>
    <property type="molecule type" value="Genomic_DNA"/>
</dbReference>
<dbReference type="RefSeq" id="WP_011955747.1">
    <property type="nucleotide sequence ID" value="NC_009523.1"/>
</dbReference>
<dbReference type="SMR" id="A5URZ1"/>
<dbReference type="STRING" id="357808.RoseRS_0985"/>
<dbReference type="KEGG" id="rrs:RoseRS_0985"/>
<dbReference type="eggNOG" id="COG0781">
    <property type="taxonomic scope" value="Bacteria"/>
</dbReference>
<dbReference type="HOGENOM" id="CLU_087843_3_2_0"/>
<dbReference type="OrthoDB" id="9811381at2"/>
<dbReference type="Proteomes" id="UP000006554">
    <property type="component" value="Chromosome"/>
</dbReference>
<dbReference type="GO" id="GO:0005829">
    <property type="term" value="C:cytosol"/>
    <property type="evidence" value="ECO:0007669"/>
    <property type="project" value="TreeGrafter"/>
</dbReference>
<dbReference type="GO" id="GO:0003723">
    <property type="term" value="F:RNA binding"/>
    <property type="evidence" value="ECO:0007669"/>
    <property type="project" value="UniProtKB-UniRule"/>
</dbReference>
<dbReference type="GO" id="GO:0006353">
    <property type="term" value="P:DNA-templated transcription termination"/>
    <property type="evidence" value="ECO:0007669"/>
    <property type="project" value="UniProtKB-UniRule"/>
</dbReference>
<dbReference type="GO" id="GO:0031564">
    <property type="term" value="P:transcription antitermination"/>
    <property type="evidence" value="ECO:0007669"/>
    <property type="project" value="UniProtKB-KW"/>
</dbReference>
<dbReference type="Gene3D" id="1.10.940.10">
    <property type="entry name" value="NusB-like"/>
    <property type="match status" value="1"/>
</dbReference>
<dbReference type="HAMAP" id="MF_00073">
    <property type="entry name" value="NusB"/>
    <property type="match status" value="1"/>
</dbReference>
<dbReference type="InterPro" id="IPR035926">
    <property type="entry name" value="NusB-like_sf"/>
</dbReference>
<dbReference type="InterPro" id="IPR011605">
    <property type="entry name" value="NusB_fam"/>
</dbReference>
<dbReference type="InterPro" id="IPR006027">
    <property type="entry name" value="NusB_RsmB_TIM44"/>
</dbReference>
<dbReference type="NCBIfam" id="TIGR01951">
    <property type="entry name" value="nusB"/>
    <property type="match status" value="1"/>
</dbReference>
<dbReference type="PANTHER" id="PTHR11078:SF3">
    <property type="entry name" value="ANTITERMINATION NUSB DOMAIN-CONTAINING PROTEIN"/>
    <property type="match status" value="1"/>
</dbReference>
<dbReference type="PANTHER" id="PTHR11078">
    <property type="entry name" value="N UTILIZATION SUBSTANCE PROTEIN B-RELATED"/>
    <property type="match status" value="1"/>
</dbReference>
<dbReference type="Pfam" id="PF01029">
    <property type="entry name" value="NusB"/>
    <property type="match status" value="1"/>
</dbReference>
<dbReference type="SUPFAM" id="SSF48013">
    <property type="entry name" value="NusB-like"/>
    <property type="match status" value="1"/>
</dbReference>
<protein>
    <recommendedName>
        <fullName evidence="1">Transcription antitermination protein NusB</fullName>
    </recommendedName>
    <alternativeName>
        <fullName evidence="1">Antitermination factor NusB</fullName>
    </alternativeName>
</protein>
<reference key="1">
    <citation type="submission" date="2007-04" db="EMBL/GenBank/DDBJ databases">
        <title>Complete sequence of Roseiflexus sp. RS-1.</title>
        <authorList>
            <consortium name="US DOE Joint Genome Institute"/>
            <person name="Copeland A."/>
            <person name="Lucas S."/>
            <person name="Lapidus A."/>
            <person name="Barry K."/>
            <person name="Detter J.C."/>
            <person name="Glavina del Rio T."/>
            <person name="Hammon N."/>
            <person name="Israni S."/>
            <person name="Dalin E."/>
            <person name="Tice H."/>
            <person name="Pitluck S."/>
            <person name="Chertkov O."/>
            <person name="Brettin T."/>
            <person name="Bruce D."/>
            <person name="Han C."/>
            <person name="Schmutz J."/>
            <person name="Larimer F."/>
            <person name="Land M."/>
            <person name="Hauser L."/>
            <person name="Kyrpides N."/>
            <person name="Mikhailova N."/>
            <person name="Bryant D.A."/>
            <person name="Richardson P."/>
        </authorList>
    </citation>
    <scope>NUCLEOTIDE SEQUENCE [LARGE SCALE GENOMIC DNA]</scope>
    <source>
        <strain>RS-1</strain>
    </source>
</reference>
<keyword id="KW-0694">RNA-binding</keyword>
<keyword id="KW-0804">Transcription</keyword>
<keyword id="KW-0889">Transcription antitermination</keyword>
<keyword id="KW-0805">Transcription regulation</keyword>
<organism>
    <name type="scientific">Roseiflexus sp. (strain RS-1)</name>
    <dbReference type="NCBI Taxonomy" id="357808"/>
    <lineage>
        <taxon>Bacteria</taxon>
        <taxon>Bacillati</taxon>
        <taxon>Chloroflexota</taxon>
        <taxon>Chloroflexia</taxon>
        <taxon>Chloroflexales</taxon>
        <taxon>Roseiflexineae</taxon>
        <taxon>Roseiflexaceae</taxon>
        <taxon>Roseiflexus</taxon>
    </lineage>
</organism>
<name>NUSB_ROSS1</name>
<evidence type="ECO:0000255" key="1">
    <source>
        <dbReference type="HAMAP-Rule" id="MF_00073"/>
    </source>
</evidence>
<accession>A5URZ1</accession>
<proteinExistence type="inferred from homology"/>